<name>MOBA_NITHX</name>
<comment type="function">
    <text evidence="1">Transfers a GMP moiety from GTP to Mo-molybdopterin (Mo-MPT) cofactor (Moco or molybdenum cofactor) to form Mo-molybdopterin guanine dinucleotide (Mo-MGD) cofactor.</text>
</comment>
<comment type="catalytic activity">
    <reaction evidence="1">
        <text>Mo-molybdopterin + GTP + H(+) = Mo-molybdopterin guanine dinucleotide + diphosphate</text>
        <dbReference type="Rhea" id="RHEA:34243"/>
        <dbReference type="ChEBI" id="CHEBI:15378"/>
        <dbReference type="ChEBI" id="CHEBI:33019"/>
        <dbReference type="ChEBI" id="CHEBI:37565"/>
        <dbReference type="ChEBI" id="CHEBI:71302"/>
        <dbReference type="ChEBI" id="CHEBI:71310"/>
        <dbReference type="EC" id="2.7.7.77"/>
    </reaction>
</comment>
<comment type="cofactor">
    <cofactor evidence="1">
        <name>Mg(2+)</name>
        <dbReference type="ChEBI" id="CHEBI:18420"/>
    </cofactor>
</comment>
<comment type="subunit">
    <text evidence="1">Monomer.</text>
</comment>
<comment type="subcellular location">
    <subcellularLocation>
        <location evidence="1">Cytoplasm</location>
    </subcellularLocation>
</comment>
<comment type="domain">
    <text evidence="1">The N-terminal domain determines nucleotide recognition and specific binding, while the C-terminal domain determines the specific binding to the target protein.</text>
</comment>
<comment type="similarity">
    <text evidence="1">Belongs to the MobA family.</text>
</comment>
<protein>
    <recommendedName>
        <fullName evidence="1">Molybdenum cofactor guanylyltransferase</fullName>
        <shortName evidence="1">MoCo guanylyltransferase</shortName>
        <ecNumber evidence="1">2.7.7.77</ecNumber>
    </recommendedName>
    <alternativeName>
        <fullName evidence="1">GTP:molybdopterin guanylyltransferase</fullName>
    </alternativeName>
    <alternativeName>
        <fullName evidence="1">Mo-MPT guanylyltransferase</fullName>
    </alternativeName>
    <alternativeName>
        <fullName evidence="1">Molybdopterin guanylyltransferase</fullName>
    </alternativeName>
    <alternativeName>
        <fullName evidence="1">Molybdopterin-guanine dinucleotide synthase</fullName>
        <shortName evidence="1">MGD synthase</shortName>
    </alternativeName>
</protein>
<accession>Q1QIS8</accession>
<organism>
    <name type="scientific">Nitrobacter hamburgensis (strain DSM 10229 / NCIMB 13809 / X14)</name>
    <dbReference type="NCBI Taxonomy" id="323097"/>
    <lineage>
        <taxon>Bacteria</taxon>
        <taxon>Pseudomonadati</taxon>
        <taxon>Pseudomonadota</taxon>
        <taxon>Alphaproteobacteria</taxon>
        <taxon>Hyphomicrobiales</taxon>
        <taxon>Nitrobacteraceae</taxon>
        <taxon>Nitrobacter</taxon>
    </lineage>
</organism>
<reference key="1">
    <citation type="submission" date="2006-03" db="EMBL/GenBank/DDBJ databases">
        <title>Complete sequence of chromosome of Nitrobacter hamburgensis X14.</title>
        <authorList>
            <consortium name="US DOE Joint Genome Institute"/>
            <person name="Copeland A."/>
            <person name="Lucas S."/>
            <person name="Lapidus A."/>
            <person name="Barry K."/>
            <person name="Detter J.C."/>
            <person name="Glavina del Rio T."/>
            <person name="Hammon N."/>
            <person name="Israni S."/>
            <person name="Dalin E."/>
            <person name="Tice H."/>
            <person name="Pitluck S."/>
            <person name="Chain P."/>
            <person name="Malfatti S."/>
            <person name="Shin M."/>
            <person name="Vergez L."/>
            <person name="Schmutz J."/>
            <person name="Larimer F."/>
            <person name="Land M."/>
            <person name="Hauser L."/>
            <person name="Kyrpides N."/>
            <person name="Ivanova N."/>
            <person name="Ward B."/>
            <person name="Arp D."/>
            <person name="Klotz M."/>
            <person name="Stein L."/>
            <person name="O'Mullan G."/>
            <person name="Starkenburg S."/>
            <person name="Sayavedra L."/>
            <person name="Poret-Peterson A.T."/>
            <person name="Gentry M.E."/>
            <person name="Bruce D."/>
            <person name="Richardson P."/>
        </authorList>
    </citation>
    <scope>NUCLEOTIDE SEQUENCE [LARGE SCALE GENOMIC DNA]</scope>
    <source>
        <strain>DSM 10229 / NCIMB 13809 / X14</strain>
    </source>
</reference>
<evidence type="ECO:0000255" key="1">
    <source>
        <dbReference type="HAMAP-Rule" id="MF_00316"/>
    </source>
</evidence>
<keyword id="KW-0963">Cytoplasm</keyword>
<keyword id="KW-0342">GTP-binding</keyword>
<keyword id="KW-0460">Magnesium</keyword>
<keyword id="KW-0479">Metal-binding</keyword>
<keyword id="KW-0501">Molybdenum cofactor biosynthesis</keyword>
<keyword id="KW-0547">Nucleotide-binding</keyword>
<keyword id="KW-1185">Reference proteome</keyword>
<keyword id="KW-0808">Transferase</keyword>
<feature type="chain" id="PRO_1000072001" description="Molybdenum cofactor guanylyltransferase">
    <location>
        <begin position="1"/>
        <end position="209"/>
    </location>
</feature>
<feature type="binding site" evidence="1">
    <location>
        <begin position="13"/>
        <end position="15"/>
    </location>
    <ligand>
        <name>GTP</name>
        <dbReference type="ChEBI" id="CHEBI:37565"/>
    </ligand>
</feature>
<feature type="binding site" evidence="1">
    <location>
        <position position="26"/>
    </location>
    <ligand>
        <name>GTP</name>
        <dbReference type="ChEBI" id="CHEBI:37565"/>
    </ligand>
</feature>
<feature type="binding site" evidence="1">
    <location>
        <position position="54"/>
    </location>
    <ligand>
        <name>GTP</name>
        <dbReference type="ChEBI" id="CHEBI:37565"/>
    </ligand>
</feature>
<feature type="binding site" evidence="1">
    <location>
        <position position="72"/>
    </location>
    <ligand>
        <name>GTP</name>
        <dbReference type="ChEBI" id="CHEBI:37565"/>
    </ligand>
</feature>
<feature type="binding site" evidence="1">
    <location>
        <position position="107"/>
    </location>
    <ligand>
        <name>GTP</name>
        <dbReference type="ChEBI" id="CHEBI:37565"/>
    </ligand>
</feature>
<feature type="binding site" evidence="1">
    <location>
        <position position="107"/>
    </location>
    <ligand>
        <name>Mg(2+)</name>
        <dbReference type="ChEBI" id="CHEBI:18420"/>
    </ligand>
</feature>
<sequence length="209" mass="22551">MTIEIPPTQGVLLAGGLARRMGGGDKPMRTIGGSTILERVIARLKPQCDGIILNANGDPGRFAMFGLTVVADNVPDFPGPLAGILAALDWTATNRPGVEWVLSAAADCPFLPRDLVMRLHQGRAEEKAQLAVAVSGEQSHPVIGLWHVGLREELRRALVKDDIRKIDRWTACYRLAAVSWPTEPLDPFFNANTVEDIAEAERLAALDGG</sequence>
<gene>
    <name evidence="1" type="primary">mobA</name>
    <name type="ordered locus">Nham_3133</name>
</gene>
<proteinExistence type="inferred from homology"/>
<dbReference type="EC" id="2.7.7.77" evidence="1"/>
<dbReference type="EMBL" id="CP000319">
    <property type="protein sequence ID" value="ABE63869.1"/>
    <property type="molecule type" value="Genomic_DNA"/>
</dbReference>
<dbReference type="RefSeq" id="WP_011511527.1">
    <property type="nucleotide sequence ID" value="NC_007964.1"/>
</dbReference>
<dbReference type="SMR" id="Q1QIS8"/>
<dbReference type="STRING" id="323097.Nham_3133"/>
<dbReference type="KEGG" id="nha:Nham_3133"/>
<dbReference type="eggNOG" id="COG0746">
    <property type="taxonomic scope" value="Bacteria"/>
</dbReference>
<dbReference type="HOGENOM" id="CLU_055597_5_0_5"/>
<dbReference type="Proteomes" id="UP000001953">
    <property type="component" value="Chromosome"/>
</dbReference>
<dbReference type="GO" id="GO:0005737">
    <property type="term" value="C:cytoplasm"/>
    <property type="evidence" value="ECO:0007669"/>
    <property type="project" value="UniProtKB-SubCell"/>
</dbReference>
<dbReference type="GO" id="GO:0005525">
    <property type="term" value="F:GTP binding"/>
    <property type="evidence" value="ECO:0007669"/>
    <property type="project" value="UniProtKB-UniRule"/>
</dbReference>
<dbReference type="GO" id="GO:0046872">
    <property type="term" value="F:metal ion binding"/>
    <property type="evidence" value="ECO:0007669"/>
    <property type="project" value="UniProtKB-KW"/>
</dbReference>
<dbReference type="GO" id="GO:0061603">
    <property type="term" value="F:molybdenum cofactor guanylyltransferase activity"/>
    <property type="evidence" value="ECO:0007669"/>
    <property type="project" value="UniProtKB-EC"/>
</dbReference>
<dbReference type="GO" id="GO:1902758">
    <property type="term" value="P:bis(molybdopterin guanine dinucleotide)molybdenum biosynthetic process"/>
    <property type="evidence" value="ECO:0007669"/>
    <property type="project" value="TreeGrafter"/>
</dbReference>
<dbReference type="CDD" id="cd02503">
    <property type="entry name" value="MobA"/>
    <property type="match status" value="1"/>
</dbReference>
<dbReference type="Gene3D" id="3.90.550.10">
    <property type="entry name" value="Spore Coat Polysaccharide Biosynthesis Protein SpsA, Chain A"/>
    <property type="match status" value="1"/>
</dbReference>
<dbReference type="HAMAP" id="MF_00316">
    <property type="entry name" value="MobA"/>
    <property type="match status" value="1"/>
</dbReference>
<dbReference type="InterPro" id="IPR025877">
    <property type="entry name" value="MobA-like_NTP_Trfase"/>
</dbReference>
<dbReference type="InterPro" id="IPR013482">
    <property type="entry name" value="Molybde_CF_guanTrfase"/>
</dbReference>
<dbReference type="InterPro" id="IPR029044">
    <property type="entry name" value="Nucleotide-diphossugar_trans"/>
</dbReference>
<dbReference type="NCBIfam" id="TIGR02665">
    <property type="entry name" value="molyb_mobA"/>
    <property type="match status" value="1"/>
</dbReference>
<dbReference type="PANTHER" id="PTHR19136">
    <property type="entry name" value="MOLYBDENUM COFACTOR GUANYLYLTRANSFERASE"/>
    <property type="match status" value="1"/>
</dbReference>
<dbReference type="PANTHER" id="PTHR19136:SF81">
    <property type="entry name" value="MOLYBDENUM COFACTOR GUANYLYLTRANSFERASE"/>
    <property type="match status" value="1"/>
</dbReference>
<dbReference type="Pfam" id="PF12804">
    <property type="entry name" value="NTP_transf_3"/>
    <property type="match status" value="1"/>
</dbReference>
<dbReference type="SUPFAM" id="SSF53448">
    <property type="entry name" value="Nucleotide-diphospho-sugar transferases"/>
    <property type="match status" value="1"/>
</dbReference>